<name>HMGN5_RAT</name>
<sequence length="429" mass="48605">MPKRKAAGDASQEPKRRSARLSAMPVPFTPELKPKRASTSRKTKTTNVVEESKDAGATTIPETKPEVVKGECNMENAENGEAKIIEAPISKMETEEVKEQINEDTEGDGGEKKEAVVTKGKNDELEANIQDVEKDEDEKEHEDTGEEGEDGEREGGLKEKPDVAEIEDAKEAKDDEEKEDKEKEDDKGGDGKKEEEKDDEGEAETEEEVKEQQKEETEGDDGKCKVEENKEGRKESQHEEEGKEELHEEDGKEDLHEEDGKEDLHEEDGKEDLHEEEGKEDLHEEEGKEDLHEEEGKEDLHEEEGKEDLHEEEGKEDLHEEEGKEDLHEEEGKEDLHEEDGKEGQHEEEGKEDLHEEEGKEDLHEEDGKEGQHEEDGKKKADGNEDRKEEEEQEAATEGNDENKVEVEEEADNKDFKEDGEKGEPVSTV</sequence>
<protein>
    <recommendedName>
        <fullName>High mobility group nucleosome-binding domain-containing protein 5</fullName>
    </recommendedName>
    <alternativeName>
        <fullName evidence="8">Nucleosome-binding protein 1</fullName>
    </alternativeName>
</protein>
<accession>B4F777</accession>
<reference evidence="10" key="1">
    <citation type="journal article" date="2004" name="Genome Res.">
        <title>The status, quality, and expansion of the NIH full-length cDNA project: the Mammalian Gene Collection (MGC).</title>
        <authorList>
            <consortium name="The MGC Project Team"/>
        </authorList>
    </citation>
    <scope>NUCLEOTIDE SEQUENCE [LARGE SCALE MRNA]</scope>
    <source>
        <strain evidence="6">Brown Norway/NHsdMcwi</strain>
        <tissue evidence="10">Embryonic brain</tissue>
    </source>
</reference>
<reference evidence="9" key="2">
    <citation type="journal article" date="2009" name="J. Cell. Biochem.">
        <title>The nucleosomal binding protein NSBP1 is highly expressed in the placenta and modulates the expression of differentiation markers in placental Rcho-1 cells.</title>
        <authorList>
            <person name="Shirakawa H."/>
            <person name="Rochman M."/>
            <person name="Furusawa T."/>
            <person name="Kuehn M.R."/>
            <person name="Horigome S."/>
            <person name="Haketa K."/>
            <person name="Sugita Y."/>
            <person name="Inada T."/>
            <person name="Komai M."/>
            <person name="Bustin M."/>
        </authorList>
    </citation>
    <scope>TISSUE SPECIFICITY</scope>
    <scope>INDUCTION</scope>
</reference>
<evidence type="ECO:0000250" key="1"/>
<evidence type="ECO:0000250" key="2">
    <source>
        <dbReference type="UniProtKB" id="P82970"/>
    </source>
</evidence>
<evidence type="ECO:0000250" key="3">
    <source>
        <dbReference type="UniProtKB" id="Q9JL35"/>
    </source>
</evidence>
<evidence type="ECO:0000255" key="4"/>
<evidence type="ECO:0000256" key="5">
    <source>
        <dbReference type="SAM" id="MobiDB-lite"/>
    </source>
</evidence>
<evidence type="ECO:0000269" key="6">
    <source>
    </source>
</evidence>
<evidence type="ECO:0000269" key="7">
    <source>
    </source>
</evidence>
<evidence type="ECO:0000303" key="8">
    <source>
    </source>
</evidence>
<evidence type="ECO:0000305" key="9"/>
<evidence type="ECO:0000312" key="10">
    <source>
        <dbReference type="EMBL" id="AAI68165.1"/>
    </source>
</evidence>
<evidence type="ECO:0000312" key="11">
    <source>
        <dbReference type="RGD" id="1597988"/>
    </source>
</evidence>
<keyword id="KW-0156">Chromatin regulator</keyword>
<keyword id="KW-0238">DNA-binding</keyword>
<keyword id="KW-1017">Isopeptide bond</keyword>
<keyword id="KW-0539">Nucleus</keyword>
<keyword id="KW-0597">Phosphoprotein</keyword>
<keyword id="KW-1185">Reference proteome</keyword>
<keyword id="KW-0804">Transcription</keyword>
<keyword id="KW-0805">Transcription regulation</keyword>
<keyword id="KW-0832">Ubl conjugation</keyword>
<organism>
    <name type="scientific">Rattus norvegicus</name>
    <name type="common">Rat</name>
    <dbReference type="NCBI Taxonomy" id="10116"/>
    <lineage>
        <taxon>Eukaryota</taxon>
        <taxon>Metazoa</taxon>
        <taxon>Chordata</taxon>
        <taxon>Craniata</taxon>
        <taxon>Vertebrata</taxon>
        <taxon>Euteleostomi</taxon>
        <taxon>Mammalia</taxon>
        <taxon>Eutheria</taxon>
        <taxon>Euarchontoglires</taxon>
        <taxon>Glires</taxon>
        <taxon>Rodentia</taxon>
        <taxon>Myomorpha</taxon>
        <taxon>Muroidea</taxon>
        <taxon>Muridae</taxon>
        <taxon>Murinae</taxon>
        <taxon>Rattus</taxon>
    </lineage>
</organism>
<dbReference type="EMBL" id="BC168165">
    <property type="protein sequence ID" value="AAI68165.1"/>
    <property type="molecule type" value="mRNA"/>
</dbReference>
<dbReference type="RefSeq" id="NP_001128178.1">
    <property type="nucleotide sequence ID" value="NM_001134706.1"/>
</dbReference>
<dbReference type="RefSeq" id="XP_038955316.1">
    <property type="nucleotide sequence ID" value="XM_039099388.2"/>
</dbReference>
<dbReference type="BioGRID" id="596215">
    <property type="interactions" value="1"/>
</dbReference>
<dbReference type="STRING" id="10116.ENSRNOP00000047671"/>
<dbReference type="iPTMnet" id="B4F777"/>
<dbReference type="PhosphoSitePlus" id="B4F777"/>
<dbReference type="jPOST" id="B4F777"/>
<dbReference type="PaxDb" id="10116-ENSRNOP00000047671"/>
<dbReference type="PeptideAtlas" id="B4F777"/>
<dbReference type="GeneID" id="100910616"/>
<dbReference type="GeneID" id="120097335"/>
<dbReference type="KEGG" id="rno:120097335"/>
<dbReference type="UCSC" id="RGD:1597988">
    <property type="organism name" value="rat"/>
</dbReference>
<dbReference type="AGR" id="RGD:1308736"/>
<dbReference type="AGR" id="RGD:6497694"/>
<dbReference type="CTD" id="120097335"/>
<dbReference type="RGD" id="1597988">
    <property type="gene designation" value="Hmgn5"/>
</dbReference>
<dbReference type="VEuPathDB" id="HostDB:ENSRNOG00000029078"/>
<dbReference type="eggNOG" id="ENOG502SUX9">
    <property type="taxonomic scope" value="Eukaryota"/>
</dbReference>
<dbReference type="HOGENOM" id="CLU_685059_0_0_1"/>
<dbReference type="InParanoid" id="B4F777"/>
<dbReference type="OrthoDB" id="9540224at2759"/>
<dbReference type="TreeFam" id="TF105374"/>
<dbReference type="PRO" id="PR:B4F777"/>
<dbReference type="Proteomes" id="UP000002494">
    <property type="component" value="Chromosome X"/>
</dbReference>
<dbReference type="Bgee" id="ENSRNOG00000029078">
    <property type="expression patterns" value="Expressed in ovary and 19 other cell types or tissues"/>
</dbReference>
<dbReference type="GO" id="GO:0000785">
    <property type="term" value="C:chromatin"/>
    <property type="evidence" value="ECO:0007669"/>
    <property type="project" value="InterPro"/>
</dbReference>
<dbReference type="GO" id="GO:0005634">
    <property type="term" value="C:nucleus"/>
    <property type="evidence" value="ECO:0007669"/>
    <property type="project" value="UniProtKB-SubCell"/>
</dbReference>
<dbReference type="GO" id="GO:0031492">
    <property type="term" value="F:nucleosomal DNA binding"/>
    <property type="evidence" value="ECO:0007669"/>
    <property type="project" value="InterPro"/>
</dbReference>
<dbReference type="GO" id="GO:0006325">
    <property type="term" value="P:chromatin organization"/>
    <property type="evidence" value="ECO:0007669"/>
    <property type="project" value="UniProtKB-KW"/>
</dbReference>
<dbReference type="InterPro" id="IPR040164">
    <property type="entry name" value="HMGN5"/>
</dbReference>
<dbReference type="InterPro" id="IPR000079">
    <property type="entry name" value="HMGN_fam"/>
</dbReference>
<dbReference type="PANTHER" id="PTHR23145:SF6">
    <property type="entry name" value="HIGH MOBILITY GROUP NUCLEOSOME-BINDING DOMAIN-CONTAINING PROTEIN 5"/>
    <property type="match status" value="1"/>
</dbReference>
<dbReference type="PANTHER" id="PTHR23145">
    <property type="entry name" value="NUCLEOSOMAL BINDING PROTEIN 1"/>
    <property type="match status" value="1"/>
</dbReference>
<dbReference type="Pfam" id="PF01101">
    <property type="entry name" value="HMG14_17"/>
    <property type="match status" value="1"/>
</dbReference>
<dbReference type="PRINTS" id="PR00925">
    <property type="entry name" value="NONHISHMG17"/>
</dbReference>
<dbReference type="SMART" id="SM00527">
    <property type="entry name" value="HMG17"/>
    <property type="match status" value="1"/>
</dbReference>
<dbReference type="PROSITE" id="PS00355">
    <property type="entry name" value="HMG14_17"/>
    <property type="match status" value="1"/>
</dbReference>
<gene>
    <name evidence="2" type="primary">Hmgn5</name>
    <name evidence="11" type="synonym">Nsbp1</name>
</gene>
<comment type="function">
    <text evidence="1">Preferentially binds to euchromatin and modulates cellular transcription by counteracting linker histone-mediated chromatin compaction.</text>
</comment>
<comment type="subcellular location">
    <subcellularLocation>
        <location evidence="3">Nucleus</location>
    </subcellularLocation>
    <text evidence="3">Associates with nucleosomes in euchromatin and is largely excluded from constitutive heterochromatin.</text>
</comment>
<comment type="tissue specificity">
    <text evidence="7">Expressed in trophoblast giant cells.</text>
</comment>
<comment type="induction">
    <text evidence="7">Up-regulated in differentiated trophoblast giant cells.</text>
</comment>
<comment type="domain">
    <text evidence="3">Specifically targeted by its C-terminus to nucleosomes in euchromatin.</text>
</comment>
<comment type="similarity">
    <text evidence="4">Belongs to the HMGN family.</text>
</comment>
<feature type="chain" id="PRO_0000390932" description="High mobility group nucleosome-binding domain-containing protein 5">
    <location>
        <begin position="1"/>
        <end position="429"/>
    </location>
</feature>
<feature type="region of interest" description="Disordered" evidence="5">
    <location>
        <begin position="1"/>
        <end position="429"/>
    </location>
</feature>
<feature type="compositionally biased region" description="Basic residues" evidence="5">
    <location>
        <begin position="35"/>
        <end position="44"/>
    </location>
</feature>
<feature type="compositionally biased region" description="Basic and acidic residues" evidence="5">
    <location>
        <begin position="92"/>
        <end position="101"/>
    </location>
</feature>
<feature type="compositionally biased region" description="Basic and acidic residues" evidence="5">
    <location>
        <begin position="109"/>
        <end position="124"/>
    </location>
</feature>
<feature type="compositionally biased region" description="Acidic residues" evidence="5">
    <location>
        <begin position="133"/>
        <end position="152"/>
    </location>
</feature>
<feature type="compositionally biased region" description="Basic and acidic residues" evidence="5">
    <location>
        <begin position="153"/>
        <end position="195"/>
    </location>
</feature>
<feature type="compositionally biased region" description="Acidic residues" evidence="5">
    <location>
        <begin position="196"/>
        <end position="209"/>
    </location>
</feature>
<feature type="compositionally biased region" description="Basic and acidic residues" evidence="5">
    <location>
        <begin position="210"/>
        <end position="387"/>
    </location>
</feature>
<feature type="compositionally biased region" description="Basic and acidic residues" evidence="5">
    <location>
        <begin position="413"/>
        <end position="429"/>
    </location>
</feature>
<feature type="modified residue" description="Phosphothreonine" evidence="2">
    <location>
        <position position="29"/>
    </location>
</feature>
<feature type="modified residue" description="Phosphoserine" evidence="2">
    <location>
        <position position="90"/>
    </location>
</feature>
<feature type="cross-link" description="Glycyl lysine isopeptide (Lys-Gly) (interchain with G-Cter in SUMO2)" evidence="2">
    <location>
        <position position="64"/>
    </location>
</feature>
<feature type="cross-link" description="Glycyl lysine isopeptide (Lys-Gly) (interchain with G-Cter in SUMO1); alternate" evidence="2">
    <location>
        <position position="98"/>
    </location>
</feature>
<feature type="cross-link" description="Glycyl lysine isopeptide (Lys-Gly) (interchain with G-Cter in SUMO2); alternate" evidence="2">
    <location>
        <position position="98"/>
    </location>
</feature>
<feature type="cross-link" description="Glycyl lysine isopeptide (Lys-Gly) (interchain with G-Cter in SUMO2)" evidence="2">
    <location>
        <position position="121"/>
    </location>
</feature>
<proteinExistence type="evidence at transcript level"/>